<name>MSC6_KLULA</name>
<proteinExistence type="inferred from homology"/>
<accession>Q6CTF5</accession>
<protein>
    <recommendedName>
        <fullName>Meiotic sister-chromatid recombination protein 6, mitochondrial</fullName>
    </recommendedName>
</protein>
<organism>
    <name type="scientific">Kluyveromyces lactis (strain ATCC 8585 / CBS 2359 / DSM 70799 / NBRC 1267 / NRRL Y-1140 / WM37)</name>
    <name type="common">Yeast</name>
    <name type="synonym">Candida sphaerica</name>
    <dbReference type="NCBI Taxonomy" id="284590"/>
    <lineage>
        <taxon>Eukaryota</taxon>
        <taxon>Fungi</taxon>
        <taxon>Dikarya</taxon>
        <taxon>Ascomycota</taxon>
        <taxon>Saccharomycotina</taxon>
        <taxon>Saccharomycetes</taxon>
        <taxon>Saccharomycetales</taxon>
        <taxon>Saccharomycetaceae</taxon>
        <taxon>Kluyveromyces</taxon>
    </lineage>
</organism>
<feature type="transit peptide" description="Mitochondrion" evidence="2">
    <location>
        <begin position="1"/>
        <end position="15"/>
    </location>
</feature>
<feature type="chain" id="PRO_0000043075" description="Meiotic sister-chromatid recombination protein 6, mitochondrial">
    <location>
        <begin position="16"/>
        <end position="708"/>
    </location>
</feature>
<feature type="region of interest" description="Disordered" evidence="3">
    <location>
        <begin position="19"/>
        <end position="44"/>
    </location>
</feature>
<feature type="compositionally biased region" description="Polar residues" evidence="3">
    <location>
        <begin position="19"/>
        <end position="36"/>
    </location>
</feature>
<comment type="function">
    <text evidence="1">May be involved in the control of meiotic sister-chromatid recombination.</text>
</comment>
<comment type="subcellular location">
    <subcellularLocation>
        <location evidence="1">Mitochondrion</location>
    </subcellularLocation>
</comment>
<gene>
    <name type="primary">MSC6</name>
    <name type="ordered locus">KLLA0C13101g</name>
</gene>
<keyword id="KW-0233">DNA recombination</keyword>
<keyword id="KW-0469">Meiosis</keyword>
<keyword id="KW-0496">Mitochondrion</keyword>
<keyword id="KW-1185">Reference proteome</keyword>
<keyword id="KW-0809">Transit peptide</keyword>
<dbReference type="EMBL" id="CR382123">
    <property type="protein sequence ID" value="CAH01635.1"/>
    <property type="molecule type" value="Genomic_DNA"/>
</dbReference>
<dbReference type="RefSeq" id="XP_452784.1">
    <property type="nucleotide sequence ID" value="XM_452784.1"/>
</dbReference>
<dbReference type="SMR" id="Q6CTF5"/>
<dbReference type="FunCoup" id="Q6CTF5">
    <property type="interactions" value="83"/>
</dbReference>
<dbReference type="PaxDb" id="284590-Q6CTF5"/>
<dbReference type="KEGG" id="kla:KLLA0_C13101g"/>
<dbReference type="eggNOG" id="ENOG502QW5R">
    <property type="taxonomic scope" value="Eukaryota"/>
</dbReference>
<dbReference type="HOGENOM" id="CLU_398067_0_0_1"/>
<dbReference type="InParanoid" id="Q6CTF5"/>
<dbReference type="OMA" id="WVKYLET"/>
<dbReference type="Proteomes" id="UP000000598">
    <property type="component" value="Chromosome C"/>
</dbReference>
<dbReference type="GO" id="GO:0005739">
    <property type="term" value="C:mitochondrion"/>
    <property type="evidence" value="ECO:0007669"/>
    <property type="project" value="UniProtKB-SubCell"/>
</dbReference>
<dbReference type="GO" id="GO:0006310">
    <property type="term" value="P:DNA recombination"/>
    <property type="evidence" value="ECO:0007669"/>
    <property type="project" value="UniProtKB-KW"/>
</dbReference>
<dbReference type="GO" id="GO:0051321">
    <property type="term" value="P:meiotic cell cycle"/>
    <property type="evidence" value="ECO:0007669"/>
    <property type="project" value="UniProtKB-KW"/>
</dbReference>
<dbReference type="Gene3D" id="1.25.40.10">
    <property type="entry name" value="Tetratricopeptide repeat domain"/>
    <property type="match status" value="1"/>
</dbReference>
<dbReference type="InterPro" id="IPR011990">
    <property type="entry name" value="TPR-like_helical_dom_sf"/>
</dbReference>
<sequence length="708" mass="79667">MLSVRISARQCSVRGLATQANNVSQPAKDNATNGSDAATEKKGTARYQRIQPSVALNSLKTKLSNDFQKQQPAQKIYSQFQSDLQQLISEQQVNPRHFVNSSICNSVLAKLILQSKSELDGQSIGESASIPPTPFEILETYLKYNLARHQHFIIVLKQFLIDLQPKEAINLWISFLEHAKQMPLNNTGTSQVQALTSIAYLMLSKESNSAPDVNVLTQLLNITPSKVPFLAIEQEIKSLGLTATTKDELLKSFDDLLLQWFTADKDAFINEFLKNSNDLKLITYLWKQYLKLATKDFTTSNQEIPGAFMIKLAQLDRSLDAVKIMTQLKEASADFKPSVSLYNSLLQTVAYIPAFGKEAQSIKLNRIQAIWNSYIKSSGNITVASYKAMLEALIIAGHFKTVESFWTLDVPDDVKANSEISDIYLKNFFASVKKVHFSQLKSKIPSKVHNLELANTILLAMVHSDASVGDIDSFYSHTFQSTEGIKPNDKTLAIKLRANLAAFGDSKNESILGTIGLSANSPTATLVIEEFLKICENEESATALLKALNIDNKSNDSAKKVSNFLDYYLQHGNWEYAEELFKKYLTDNVKSPSSVNYRLFNSMFKGFSELSITRNDTGFVSKQQVYWELCQRIHNRIFNECVISTLKSVSALSRRNAEFSENELDFINNTVLPYLVKLKIENSFKLQNPKYLQNMKSNDKIHIPKELL</sequence>
<evidence type="ECO:0000250" key="1"/>
<evidence type="ECO:0000255" key="2"/>
<evidence type="ECO:0000256" key="3">
    <source>
        <dbReference type="SAM" id="MobiDB-lite"/>
    </source>
</evidence>
<reference key="1">
    <citation type="journal article" date="2004" name="Nature">
        <title>Genome evolution in yeasts.</title>
        <authorList>
            <person name="Dujon B."/>
            <person name="Sherman D."/>
            <person name="Fischer G."/>
            <person name="Durrens P."/>
            <person name="Casaregola S."/>
            <person name="Lafontaine I."/>
            <person name="de Montigny J."/>
            <person name="Marck C."/>
            <person name="Neuveglise C."/>
            <person name="Talla E."/>
            <person name="Goffard N."/>
            <person name="Frangeul L."/>
            <person name="Aigle M."/>
            <person name="Anthouard V."/>
            <person name="Babour A."/>
            <person name="Barbe V."/>
            <person name="Barnay S."/>
            <person name="Blanchin S."/>
            <person name="Beckerich J.-M."/>
            <person name="Beyne E."/>
            <person name="Bleykasten C."/>
            <person name="Boisrame A."/>
            <person name="Boyer J."/>
            <person name="Cattolico L."/>
            <person name="Confanioleri F."/>
            <person name="de Daruvar A."/>
            <person name="Despons L."/>
            <person name="Fabre E."/>
            <person name="Fairhead C."/>
            <person name="Ferry-Dumazet H."/>
            <person name="Groppi A."/>
            <person name="Hantraye F."/>
            <person name="Hennequin C."/>
            <person name="Jauniaux N."/>
            <person name="Joyet P."/>
            <person name="Kachouri R."/>
            <person name="Kerrest A."/>
            <person name="Koszul R."/>
            <person name="Lemaire M."/>
            <person name="Lesur I."/>
            <person name="Ma L."/>
            <person name="Muller H."/>
            <person name="Nicaud J.-M."/>
            <person name="Nikolski M."/>
            <person name="Oztas S."/>
            <person name="Ozier-Kalogeropoulos O."/>
            <person name="Pellenz S."/>
            <person name="Potier S."/>
            <person name="Richard G.-F."/>
            <person name="Straub M.-L."/>
            <person name="Suleau A."/>
            <person name="Swennen D."/>
            <person name="Tekaia F."/>
            <person name="Wesolowski-Louvel M."/>
            <person name="Westhof E."/>
            <person name="Wirth B."/>
            <person name="Zeniou-Meyer M."/>
            <person name="Zivanovic Y."/>
            <person name="Bolotin-Fukuhara M."/>
            <person name="Thierry A."/>
            <person name="Bouchier C."/>
            <person name="Caudron B."/>
            <person name="Scarpelli C."/>
            <person name="Gaillardin C."/>
            <person name="Weissenbach J."/>
            <person name="Wincker P."/>
            <person name="Souciet J.-L."/>
        </authorList>
    </citation>
    <scope>NUCLEOTIDE SEQUENCE [LARGE SCALE GENOMIC DNA]</scope>
    <source>
        <strain>ATCC 8585 / CBS 2359 / DSM 70799 / NBRC 1267 / NRRL Y-1140 / WM37</strain>
    </source>
</reference>